<evidence type="ECO:0000255" key="1">
    <source>
        <dbReference type="HAMAP-Rule" id="MF_01407"/>
    </source>
</evidence>
<gene>
    <name type="primary">cdc6a</name>
    <name type="ordered locus">rrnB0063</name>
</gene>
<sequence length="426" mass="47960">MGLEPFSPDSTIFRDESVLRDGYQPDRLIERDTELEQYQSALKPVINGAPPKNLFLYGQTGVGKTLSSRMVVERLIEDQQNIDGVDVQVIELNCKSLNSSYQVAANLINQFRPPTEQIKPTGYPSGMIYNMLFDELEALDATHCLIVLDEIDAIGNDDDILYKLPRANDNENVEDTLVGVIGISNDFTFRDNLSARVKDSLADEEIHFPPYDANELGNILKQRAGEAFHGTSAQRLDDGSYELQSDILEGDVVPLCAAFAAQDSGSARQALKRLYKAGDLARDEESDVITGAHVRQADEIVERDKVRDELTRLPTQSKLTLYSLLLLEREDETPSKRNRIYERYVMAAKRIDADVRTDRTIHDRLSQLTLKGFLDVDEQNKGPKGGSYYEYEFSIRADLAQEVLQEDERLAELFATDETSTTLDSF</sequence>
<comment type="function">
    <text evidence="1">Involved in regulation of DNA replication.</text>
</comment>
<comment type="similarity">
    <text evidence="1">Belongs to the CDC6/cdc18 family.</text>
</comment>
<accession>Q5UWT2</accession>
<protein>
    <recommendedName>
        <fullName evidence="1">ORC1-type DNA replication protein 1</fullName>
    </recommendedName>
</protein>
<name>CDC6A_HALMA</name>
<dbReference type="EMBL" id="AY596298">
    <property type="protein sequence ID" value="AAV48271.1"/>
    <property type="molecule type" value="Genomic_DNA"/>
</dbReference>
<dbReference type="RefSeq" id="WP_011225048.1">
    <property type="nucleotide sequence ID" value="NZ_CP039136.1"/>
</dbReference>
<dbReference type="SMR" id="Q5UWT2"/>
<dbReference type="STRING" id="272569.rrnB0063"/>
<dbReference type="PaxDb" id="272569-rrnB0063"/>
<dbReference type="EnsemblBacteria" id="AAV48271">
    <property type="protein sequence ID" value="AAV48271"/>
    <property type="gene ID" value="rrnB0063"/>
</dbReference>
<dbReference type="KEGG" id="hma:rrnB0063"/>
<dbReference type="PATRIC" id="fig|272569.17.peg.4101"/>
<dbReference type="eggNOG" id="arCOG00467">
    <property type="taxonomic scope" value="Archaea"/>
</dbReference>
<dbReference type="HOGENOM" id="CLU_025112_3_1_2"/>
<dbReference type="Proteomes" id="UP000001169">
    <property type="component" value="Chromosome II"/>
</dbReference>
<dbReference type="GO" id="GO:0005524">
    <property type="term" value="F:ATP binding"/>
    <property type="evidence" value="ECO:0007669"/>
    <property type="project" value="UniProtKB-UniRule"/>
</dbReference>
<dbReference type="GO" id="GO:0016887">
    <property type="term" value="F:ATP hydrolysis activity"/>
    <property type="evidence" value="ECO:0007669"/>
    <property type="project" value="InterPro"/>
</dbReference>
<dbReference type="GO" id="GO:0006260">
    <property type="term" value="P:DNA replication"/>
    <property type="evidence" value="ECO:0007669"/>
    <property type="project" value="UniProtKB-UniRule"/>
</dbReference>
<dbReference type="CDD" id="cd00009">
    <property type="entry name" value="AAA"/>
    <property type="match status" value="1"/>
</dbReference>
<dbReference type="CDD" id="cd08768">
    <property type="entry name" value="Cdc6_C"/>
    <property type="match status" value="1"/>
</dbReference>
<dbReference type="Gene3D" id="1.10.8.60">
    <property type="match status" value="1"/>
</dbReference>
<dbReference type="Gene3D" id="3.40.50.300">
    <property type="entry name" value="P-loop containing nucleotide triphosphate hydrolases"/>
    <property type="match status" value="1"/>
</dbReference>
<dbReference type="Gene3D" id="1.10.10.10">
    <property type="entry name" value="Winged helix-like DNA-binding domain superfamily/Winged helix DNA-binding domain"/>
    <property type="match status" value="1"/>
</dbReference>
<dbReference type="HAMAP" id="MF_01407">
    <property type="entry name" value="ORC1_type_DNA_replic_protein"/>
    <property type="match status" value="1"/>
</dbReference>
<dbReference type="InterPro" id="IPR003593">
    <property type="entry name" value="AAA+_ATPase"/>
</dbReference>
<dbReference type="InterPro" id="IPR049945">
    <property type="entry name" value="AAA_22"/>
</dbReference>
<dbReference type="InterPro" id="IPR015163">
    <property type="entry name" value="Cdc6_C"/>
</dbReference>
<dbReference type="InterPro" id="IPR055237">
    <property type="entry name" value="Cdc6_lid"/>
</dbReference>
<dbReference type="InterPro" id="IPR050311">
    <property type="entry name" value="ORC1/CDC6"/>
</dbReference>
<dbReference type="InterPro" id="IPR014277">
    <property type="entry name" value="Orc1/Cdc6_arc"/>
</dbReference>
<dbReference type="InterPro" id="IPR027417">
    <property type="entry name" value="P-loop_NTPase"/>
</dbReference>
<dbReference type="InterPro" id="IPR036388">
    <property type="entry name" value="WH-like_DNA-bd_sf"/>
</dbReference>
<dbReference type="InterPro" id="IPR036390">
    <property type="entry name" value="WH_DNA-bd_sf"/>
</dbReference>
<dbReference type="NCBIfam" id="TIGR02928">
    <property type="entry name" value="orc1/cdc6 family replication initiation protein"/>
    <property type="match status" value="1"/>
</dbReference>
<dbReference type="PANTHER" id="PTHR10763">
    <property type="entry name" value="CELL DIVISION CONTROL PROTEIN 6-RELATED"/>
    <property type="match status" value="1"/>
</dbReference>
<dbReference type="PANTHER" id="PTHR10763:SF22">
    <property type="entry name" value="ORC1-TYPE DNA REPLICATION PROTEIN"/>
    <property type="match status" value="1"/>
</dbReference>
<dbReference type="Pfam" id="PF13401">
    <property type="entry name" value="AAA_22"/>
    <property type="match status" value="1"/>
</dbReference>
<dbReference type="Pfam" id="PF09079">
    <property type="entry name" value="Cdc6_C"/>
    <property type="match status" value="1"/>
</dbReference>
<dbReference type="Pfam" id="PF22703">
    <property type="entry name" value="Cdc6_lid"/>
    <property type="match status" value="1"/>
</dbReference>
<dbReference type="SMART" id="SM00382">
    <property type="entry name" value="AAA"/>
    <property type="match status" value="1"/>
</dbReference>
<dbReference type="SMART" id="SM01074">
    <property type="entry name" value="Cdc6_C"/>
    <property type="match status" value="1"/>
</dbReference>
<dbReference type="SUPFAM" id="SSF52540">
    <property type="entry name" value="P-loop containing nucleoside triphosphate hydrolases"/>
    <property type="match status" value="1"/>
</dbReference>
<dbReference type="SUPFAM" id="SSF46785">
    <property type="entry name" value="Winged helix' DNA-binding domain"/>
    <property type="match status" value="1"/>
</dbReference>
<keyword id="KW-0067">ATP-binding</keyword>
<keyword id="KW-0235">DNA replication</keyword>
<keyword id="KW-0547">Nucleotide-binding</keyword>
<keyword id="KW-1185">Reference proteome</keyword>
<reference key="1">
    <citation type="journal article" date="2004" name="Genome Res.">
        <title>Genome sequence of Haloarcula marismortui: a halophilic archaeon from the Dead Sea.</title>
        <authorList>
            <person name="Baliga N.S."/>
            <person name="Bonneau R."/>
            <person name="Facciotti M.T."/>
            <person name="Pan M."/>
            <person name="Glusman G."/>
            <person name="Deutsch E.W."/>
            <person name="Shannon P."/>
            <person name="Chiu Y."/>
            <person name="Weng R.S."/>
            <person name="Gan R.R."/>
            <person name="Hung P."/>
            <person name="Date S.V."/>
            <person name="Marcotte E."/>
            <person name="Hood L."/>
            <person name="Ng W.V."/>
        </authorList>
    </citation>
    <scope>NUCLEOTIDE SEQUENCE [LARGE SCALE GENOMIC DNA]</scope>
    <source>
        <strain>ATCC 43049 / DSM 3752 / JCM 8966 / VKM B-1809</strain>
    </source>
</reference>
<feature type="chain" id="PRO_0000150990" description="ORC1-type DNA replication protein 1">
    <location>
        <begin position="1"/>
        <end position="426"/>
    </location>
</feature>
<feature type="binding site" evidence="1">
    <location>
        <begin position="62"/>
        <end position="66"/>
    </location>
    <ligand>
        <name>ATP</name>
        <dbReference type="ChEBI" id="CHEBI:30616"/>
    </ligand>
</feature>
<feature type="binding site" evidence="1">
    <location>
        <position position="211"/>
    </location>
    <ligand>
        <name>ATP</name>
        <dbReference type="ChEBI" id="CHEBI:30616"/>
    </ligand>
</feature>
<feature type="binding site" evidence="1">
    <location>
        <position position="223"/>
    </location>
    <ligand>
        <name>ATP</name>
        <dbReference type="ChEBI" id="CHEBI:30616"/>
    </ligand>
</feature>
<proteinExistence type="inferred from homology"/>
<organism>
    <name type="scientific">Haloarcula marismortui (strain ATCC 43049 / DSM 3752 / JCM 8966 / VKM B-1809)</name>
    <name type="common">Halobacterium marismortui</name>
    <dbReference type="NCBI Taxonomy" id="272569"/>
    <lineage>
        <taxon>Archaea</taxon>
        <taxon>Methanobacteriati</taxon>
        <taxon>Methanobacteriota</taxon>
        <taxon>Stenosarchaea group</taxon>
        <taxon>Halobacteria</taxon>
        <taxon>Halobacteriales</taxon>
        <taxon>Haloarculaceae</taxon>
        <taxon>Haloarcula</taxon>
    </lineage>
</organism>